<reference key="1">
    <citation type="submission" date="2006-08" db="EMBL/GenBank/DDBJ databases">
        <title>Complete sequence of Maricaulis maris MCS10.</title>
        <authorList>
            <consortium name="US DOE Joint Genome Institute"/>
            <person name="Copeland A."/>
            <person name="Lucas S."/>
            <person name="Lapidus A."/>
            <person name="Barry K."/>
            <person name="Detter J.C."/>
            <person name="Glavina del Rio T."/>
            <person name="Hammon N."/>
            <person name="Israni S."/>
            <person name="Dalin E."/>
            <person name="Tice H."/>
            <person name="Pitluck S."/>
            <person name="Saunders E."/>
            <person name="Brettin T."/>
            <person name="Bruce D."/>
            <person name="Han C."/>
            <person name="Tapia R."/>
            <person name="Gilna P."/>
            <person name="Schmutz J."/>
            <person name="Larimer F."/>
            <person name="Land M."/>
            <person name="Hauser L."/>
            <person name="Kyrpides N."/>
            <person name="Mikhailova N."/>
            <person name="Viollier P."/>
            <person name="Stephens C."/>
            <person name="Richardson P."/>
        </authorList>
    </citation>
    <scope>NUCLEOTIDE SEQUENCE [LARGE SCALE GENOMIC DNA]</scope>
    <source>
        <strain>MCS10</strain>
    </source>
</reference>
<gene>
    <name evidence="1" type="primary">prfA</name>
    <name type="ordered locus">Mmar10_0646</name>
</gene>
<evidence type="ECO:0000255" key="1">
    <source>
        <dbReference type="HAMAP-Rule" id="MF_00093"/>
    </source>
</evidence>
<evidence type="ECO:0000256" key="2">
    <source>
        <dbReference type="SAM" id="MobiDB-lite"/>
    </source>
</evidence>
<name>RF1_MARMM</name>
<proteinExistence type="inferred from homology"/>
<keyword id="KW-0963">Cytoplasm</keyword>
<keyword id="KW-0488">Methylation</keyword>
<keyword id="KW-0648">Protein biosynthesis</keyword>
<keyword id="KW-1185">Reference proteome</keyword>
<organism>
    <name type="scientific">Maricaulis maris (strain MCS10)</name>
    <name type="common">Caulobacter maris</name>
    <dbReference type="NCBI Taxonomy" id="394221"/>
    <lineage>
        <taxon>Bacteria</taxon>
        <taxon>Pseudomonadati</taxon>
        <taxon>Pseudomonadota</taxon>
        <taxon>Alphaproteobacteria</taxon>
        <taxon>Maricaulales</taxon>
        <taxon>Maricaulaceae</taxon>
        <taxon>Maricaulis</taxon>
    </lineage>
</organism>
<sequence>MHAPEARLAQVIDRFDQVEARLGAAGDADEIVKLSKEHAELKPVAEKANALKSARAELAELAEMMEGDDAEMAEMAREEFYALKERLPELEHAMSLMLLPKDKDDSANAMIEIRAGTGGDEAAIFAGNLYGMYQRYAQLQGWSWELVSASEGEHGGYKEVVAAISGNGVFGRLKFESGVHRVQRVPATESQGRIHTSAATVAIMPQPEDIDIELDMGDVRVDTMRASGAGGQHVNKTDSAVRMTHIPTGLVVVCQEKSQHQNRARAQEILKAKLYDMQREAANAERAAERKGQIGSGDRSERIRTYNYPQGRVSDHRINLTLYKLDDIVAGDGLDEVVAALIAEDQAARLAALEDDA</sequence>
<protein>
    <recommendedName>
        <fullName evidence="1">Peptide chain release factor 1</fullName>
        <shortName evidence="1">RF-1</shortName>
    </recommendedName>
</protein>
<accession>Q0ARZ8</accession>
<feature type="chain" id="PRO_0000263294" description="Peptide chain release factor 1">
    <location>
        <begin position="1"/>
        <end position="357"/>
    </location>
</feature>
<feature type="region of interest" description="Disordered" evidence="2">
    <location>
        <begin position="284"/>
        <end position="308"/>
    </location>
</feature>
<feature type="compositionally biased region" description="Basic and acidic residues" evidence="2">
    <location>
        <begin position="284"/>
        <end position="304"/>
    </location>
</feature>
<feature type="modified residue" description="N5-methylglutamine" evidence="1">
    <location>
        <position position="232"/>
    </location>
</feature>
<dbReference type="EMBL" id="CP000449">
    <property type="protein sequence ID" value="ABI64939.1"/>
    <property type="molecule type" value="Genomic_DNA"/>
</dbReference>
<dbReference type="RefSeq" id="WP_011642586.1">
    <property type="nucleotide sequence ID" value="NC_008347.1"/>
</dbReference>
<dbReference type="SMR" id="Q0ARZ8"/>
<dbReference type="STRING" id="394221.Mmar10_0646"/>
<dbReference type="KEGG" id="mmr:Mmar10_0646"/>
<dbReference type="eggNOG" id="COG0216">
    <property type="taxonomic scope" value="Bacteria"/>
</dbReference>
<dbReference type="HOGENOM" id="CLU_036856_0_1_5"/>
<dbReference type="OrthoDB" id="9806673at2"/>
<dbReference type="Proteomes" id="UP000001964">
    <property type="component" value="Chromosome"/>
</dbReference>
<dbReference type="GO" id="GO:0005737">
    <property type="term" value="C:cytoplasm"/>
    <property type="evidence" value="ECO:0007669"/>
    <property type="project" value="UniProtKB-SubCell"/>
</dbReference>
<dbReference type="GO" id="GO:0016149">
    <property type="term" value="F:translation release factor activity, codon specific"/>
    <property type="evidence" value="ECO:0007669"/>
    <property type="project" value="UniProtKB-UniRule"/>
</dbReference>
<dbReference type="FunFam" id="3.30.160.20:FF:000004">
    <property type="entry name" value="Peptide chain release factor 1"/>
    <property type="match status" value="1"/>
</dbReference>
<dbReference type="FunFam" id="3.30.70.1660:FF:000002">
    <property type="entry name" value="Peptide chain release factor 1"/>
    <property type="match status" value="1"/>
</dbReference>
<dbReference type="FunFam" id="3.30.70.1660:FF:000004">
    <property type="entry name" value="Peptide chain release factor 1"/>
    <property type="match status" value="1"/>
</dbReference>
<dbReference type="Gene3D" id="3.30.160.20">
    <property type="match status" value="1"/>
</dbReference>
<dbReference type="Gene3D" id="3.30.70.1660">
    <property type="match status" value="2"/>
</dbReference>
<dbReference type="Gene3D" id="6.10.140.1950">
    <property type="match status" value="1"/>
</dbReference>
<dbReference type="HAMAP" id="MF_00093">
    <property type="entry name" value="Rel_fac_1"/>
    <property type="match status" value="1"/>
</dbReference>
<dbReference type="InterPro" id="IPR005139">
    <property type="entry name" value="PCRF"/>
</dbReference>
<dbReference type="InterPro" id="IPR000352">
    <property type="entry name" value="Pep_chain_release_fac_I"/>
</dbReference>
<dbReference type="InterPro" id="IPR045853">
    <property type="entry name" value="Pep_chain_release_fac_I_sf"/>
</dbReference>
<dbReference type="InterPro" id="IPR050057">
    <property type="entry name" value="Prokaryotic/Mito_RF"/>
</dbReference>
<dbReference type="InterPro" id="IPR004373">
    <property type="entry name" value="RF-1"/>
</dbReference>
<dbReference type="NCBIfam" id="TIGR00019">
    <property type="entry name" value="prfA"/>
    <property type="match status" value="1"/>
</dbReference>
<dbReference type="NCBIfam" id="NF001859">
    <property type="entry name" value="PRK00591.1"/>
    <property type="match status" value="1"/>
</dbReference>
<dbReference type="PANTHER" id="PTHR43804">
    <property type="entry name" value="LD18447P"/>
    <property type="match status" value="1"/>
</dbReference>
<dbReference type="PANTHER" id="PTHR43804:SF7">
    <property type="entry name" value="LD18447P"/>
    <property type="match status" value="1"/>
</dbReference>
<dbReference type="Pfam" id="PF03462">
    <property type="entry name" value="PCRF"/>
    <property type="match status" value="1"/>
</dbReference>
<dbReference type="Pfam" id="PF00472">
    <property type="entry name" value="RF-1"/>
    <property type="match status" value="1"/>
</dbReference>
<dbReference type="SMART" id="SM00937">
    <property type="entry name" value="PCRF"/>
    <property type="match status" value="1"/>
</dbReference>
<dbReference type="SUPFAM" id="SSF75620">
    <property type="entry name" value="Release factor"/>
    <property type="match status" value="1"/>
</dbReference>
<dbReference type="PROSITE" id="PS00745">
    <property type="entry name" value="RF_PROK_I"/>
    <property type="match status" value="1"/>
</dbReference>
<comment type="function">
    <text evidence="1">Peptide chain release factor 1 directs the termination of translation in response to the peptide chain termination codons UAG and UAA.</text>
</comment>
<comment type="subcellular location">
    <subcellularLocation>
        <location evidence="1">Cytoplasm</location>
    </subcellularLocation>
</comment>
<comment type="PTM">
    <text evidence="1">Methylated by PrmC. Methylation increases the termination efficiency of RF1.</text>
</comment>
<comment type="similarity">
    <text evidence="1">Belongs to the prokaryotic/mitochondrial release factor family.</text>
</comment>